<dbReference type="EC" id="3.1.1.29" evidence="1"/>
<dbReference type="EMBL" id="CP000544">
    <property type="protein sequence ID" value="ABM61763.1"/>
    <property type="molecule type" value="Genomic_DNA"/>
</dbReference>
<dbReference type="RefSeq" id="WP_011813786.1">
    <property type="nucleotide sequence ID" value="NC_008789.1"/>
</dbReference>
<dbReference type="SMR" id="A1WVQ1"/>
<dbReference type="STRING" id="349124.Hhal_0987"/>
<dbReference type="KEGG" id="hha:Hhal_0987"/>
<dbReference type="eggNOG" id="COG0193">
    <property type="taxonomic scope" value="Bacteria"/>
</dbReference>
<dbReference type="HOGENOM" id="CLU_062456_3_1_6"/>
<dbReference type="OrthoDB" id="9800507at2"/>
<dbReference type="Proteomes" id="UP000000647">
    <property type="component" value="Chromosome"/>
</dbReference>
<dbReference type="GO" id="GO:0005737">
    <property type="term" value="C:cytoplasm"/>
    <property type="evidence" value="ECO:0007669"/>
    <property type="project" value="UniProtKB-SubCell"/>
</dbReference>
<dbReference type="GO" id="GO:0004045">
    <property type="term" value="F:peptidyl-tRNA hydrolase activity"/>
    <property type="evidence" value="ECO:0007669"/>
    <property type="project" value="UniProtKB-UniRule"/>
</dbReference>
<dbReference type="GO" id="GO:0000049">
    <property type="term" value="F:tRNA binding"/>
    <property type="evidence" value="ECO:0007669"/>
    <property type="project" value="UniProtKB-UniRule"/>
</dbReference>
<dbReference type="GO" id="GO:0006515">
    <property type="term" value="P:protein quality control for misfolded or incompletely synthesized proteins"/>
    <property type="evidence" value="ECO:0007669"/>
    <property type="project" value="UniProtKB-UniRule"/>
</dbReference>
<dbReference type="GO" id="GO:0072344">
    <property type="term" value="P:rescue of stalled ribosome"/>
    <property type="evidence" value="ECO:0007669"/>
    <property type="project" value="UniProtKB-UniRule"/>
</dbReference>
<dbReference type="CDD" id="cd00462">
    <property type="entry name" value="PTH"/>
    <property type="match status" value="1"/>
</dbReference>
<dbReference type="FunFam" id="3.40.50.1470:FF:000001">
    <property type="entry name" value="Peptidyl-tRNA hydrolase"/>
    <property type="match status" value="1"/>
</dbReference>
<dbReference type="Gene3D" id="3.40.50.1470">
    <property type="entry name" value="Peptidyl-tRNA hydrolase"/>
    <property type="match status" value="1"/>
</dbReference>
<dbReference type="HAMAP" id="MF_00083">
    <property type="entry name" value="Pept_tRNA_hydro_bact"/>
    <property type="match status" value="1"/>
</dbReference>
<dbReference type="InterPro" id="IPR001328">
    <property type="entry name" value="Pept_tRNA_hydro"/>
</dbReference>
<dbReference type="InterPro" id="IPR018171">
    <property type="entry name" value="Pept_tRNA_hydro_CS"/>
</dbReference>
<dbReference type="InterPro" id="IPR036416">
    <property type="entry name" value="Pept_tRNA_hydro_sf"/>
</dbReference>
<dbReference type="NCBIfam" id="TIGR00447">
    <property type="entry name" value="pth"/>
    <property type="match status" value="1"/>
</dbReference>
<dbReference type="PANTHER" id="PTHR17224">
    <property type="entry name" value="PEPTIDYL-TRNA HYDROLASE"/>
    <property type="match status" value="1"/>
</dbReference>
<dbReference type="PANTHER" id="PTHR17224:SF1">
    <property type="entry name" value="PEPTIDYL-TRNA HYDROLASE"/>
    <property type="match status" value="1"/>
</dbReference>
<dbReference type="Pfam" id="PF01195">
    <property type="entry name" value="Pept_tRNA_hydro"/>
    <property type="match status" value="1"/>
</dbReference>
<dbReference type="SUPFAM" id="SSF53178">
    <property type="entry name" value="Peptidyl-tRNA hydrolase-like"/>
    <property type="match status" value="1"/>
</dbReference>
<dbReference type="PROSITE" id="PS01195">
    <property type="entry name" value="PEPT_TRNA_HYDROL_1"/>
    <property type="match status" value="1"/>
</dbReference>
<gene>
    <name evidence="1" type="primary">pth</name>
    <name type="ordered locus">Hhal_0987</name>
</gene>
<protein>
    <recommendedName>
        <fullName evidence="1">Peptidyl-tRNA hydrolase</fullName>
        <shortName evidence="1">Pth</shortName>
        <ecNumber evidence="1">3.1.1.29</ecNumber>
    </recommendedName>
</protein>
<evidence type="ECO:0000255" key="1">
    <source>
        <dbReference type="HAMAP-Rule" id="MF_00083"/>
    </source>
</evidence>
<comment type="function">
    <text evidence="1">Hydrolyzes ribosome-free peptidyl-tRNAs (with 1 or more amino acids incorporated), which drop off the ribosome during protein synthesis, or as a result of ribosome stalling.</text>
</comment>
<comment type="function">
    <text evidence="1">Catalyzes the release of premature peptidyl moieties from peptidyl-tRNA molecules trapped in stalled 50S ribosomal subunits, and thus maintains levels of free tRNAs and 50S ribosomes.</text>
</comment>
<comment type="catalytic activity">
    <reaction evidence="1">
        <text>an N-acyl-L-alpha-aminoacyl-tRNA + H2O = an N-acyl-L-amino acid + a tRNA + H(+)</text>
        <dbReference type="Rhea" id="RHEA:54448"/>
        <dbReference type="Rhea" id="RHEA-COMP:10123"/>
        <dbReference type="Rhea" id="RHEA-COMP:13883"/>
        <dbReference type="ChEBI" id="CHEBI:15377"/>
        <dbReference type="ChEBI" id="CHEBI:15378"/>
        <dbReference type="ChEBI" id="CHEBI:59874"/>
        <dbReference type="ChEBI" id="CHEBI:78442"/>
        <dbReference type="ChEBI" id="CHEBI:138191"/>
        <dbReference type="EC" id="3.1.1.29"/>
    </reaction>
</comment>
<comment type="subunit">
    <text evidence="1">Monomer.</text>
</comment>
<comment type="subcellular location">
    <subcellularLocation>
        <location evidence="1">Cytoplasm</location>
    </subcellularLocation>
</comment>
<comment type="similarity">
    <text evidence="1">Belongs to the PTH family.</text>
</comment>
<sequence length="194" mass="21325">MAGREGHFRLIAGLGNPGSKYAGTRHNAGFWLVDELVRRYGGELREEPKFRGDCARVLIDGYDCRLVKPMTYMNHSGQAVGALANFFKIPPEAILVAHDEIDLPPGSVRLKRGGGHGGHNGLRHIQSTLGTPDFARLRLGVGHPGHKDQVVPHVLSRPSPDELRQLERAIDDAADQIPRLLAGEWDRACQQLHA</sequence>
<reference key="1">
    <citation type="submission" date="2006-12" db="EMBL/GenBank/DDBJ databases">
        <title>Complete sequence of Halorhodospira halophila SL1.</title>
        <authorList>
            <consortium name="US DOE Joint Genome Institute"/>
            <person name="Copeland A."/>
            <person name="Lucas S."/>
            <person name="Lapidus A."/>
            <person name="Barry K."/>
            <person name="Detter J.C."/>
            <person name="Glavina del Rio T."/>
            <person name="Hammon N."/>
            <person name="Israni S."/>
            <person name="Dalin E."/>
            <person name="Tice H."/>
            <person name="Pitluck S."/>
            <person name="Saunders E."/>
            <person name="Brettin T."/>
            <person name="Bruce D."/>
            <person name="Han C."/>
            <person name="Tapia R."/>
            <person name="Schmutz J."/>
            <person name="Larimer F."/>
            <person name="Land M."/>
            <person name="Hauser L."/>
            <person name="Kyrpides N."/>
            <person name="Mikhailova N."/>
            <person name="Hoff W."/>
            <person name="Richardson P."/>
        </authorList>
    </citation>
    <scope>NUCLEOTIDE SEQUENCE [LARGE SCALE GENOMIC DNA]</scope>
    <source>
        <strain>DSM 244 / SL1</strain>
    </source>
</reference>
<organism>
    <name type="scientific">Halorhodospira halophila (strain DSM 244 / SL1)</name>
    <name type="common">Ectothiorhodospira halophila (strain DSM 244 / SL1)</name>
    <dbReference type="NCBI Taxonomy" id="349124"/>
    <lineage>
        <taxon>Bacteria</taxon>
        <taxon>Pseudomonadati</taxon>
        <taxon>Pseudomonadota</taxon>
        <taxon>Gammaproteobacteria</taxon>
        <taxon>Chromatiales</taxon>
        <taxon>Ectothiorhodospiraceae</taxon>
        <taxon>Halorhodospira</taxon>
    </lineage>
</organism>
<keyword id="KW-0963">Cytoplasm</keyword>
<keyword id="KW-0378">Hydrolase</keyword>
<keyword id="KW-1185">Reference proteome</keyword>
<keyword id="KW-0694">RNA-binding</keyword>
<keyword id="KW-0820">tRNA-binding</keyword>
<name>PTH_HALHL</name>
<accession>A1WVQ1</accession>
<feature type="chain" id="PRO_1000010595" description="Peptidyl-tRNA hydrolase">
    <location>
        <begin position="1"/>
        <end position="194"/>
    </location>
</feature>
<feature type="active site" description="Proton acceptor" evidence="1">
    <location>
        <position position="26"/>
    </location>
</feature>
<feature type="binding site" evidence="1">
    <location>
        <position position="21"/>
    </location>
    <ligand>
        <name>tRNA</name>
        <dbReference type="ChEBI" id="CHEBI:17843"/>
    </ligand>
</feature>
<feature type="binding site" evidence="1">
    <location>
        <position position="72"/>
    </location>
    <ligand>
        <name>tRNA</name>
        <dbReference type="ChEBI" id="CHEBI:17843"/>
    </ligand>
</feature>
<feature type="binding site" evidence="1">
    <location>
        <position position="74"/>
    </location>
    <ligand>
        <name>tRNA</name>
        <dbReference type="ChEBI" id="CHEBI:17843"/>
    </ligand>
</feature>
<feature type="binding site" evidence="1">
    <location>
        <position position="120"/>
    </location>
    <ligand>
        <name>tRNA</name>
        <dbReference type="ChEBI" id="CHEBI:17843"/>
    </ligand>
</feature>
<feature type="site" description="Discriminates between blocked and unblocked aminoacyl-tRNA" evidence="1">
    <location>
        <position position="16"/>
    </location>
</feature>
<feature type="site" description="Stabilizes the basic form of H active site to accept a proton" evidence="1">
    <location>
        <position position="99"/>
    </location>
</feature>
<proteinExistence type="inferred from homology"/>